<proteinExistence type="evidence at transcript level"/>
<feature type="chain" id="PRO_0000307332" description="PIH1 domain-containing protein 1">
    <location>
        <begin position="1"/>
        <end position="297"/>
    </location>
</feature>
<protein>
    <recommendedName>
        <fullName>PIH1 domain-containing protein 1</fullName>
    </recommendedName>
</protein>
<name>PIHD1_XENLA</name>
<comment type="function">
    <text evidence="2">Involved in the assembly of C/D box small nucleolar ribonucleoprotein (snoRNP) particles (By similarity). Recruits the SWI/SNF complex to the core promoter of rRNA genes and enhances pre-rRNA transcription (By similarity). Mediates interaction of TELO2 with the R2TP complex which is necessary for the stability of MTOR and SMG1 (By similarity). Positively regulates the assembly and activity of the mTORC1 complex (By similarity).</text>
</comment>
<comment type="subcellular location">
    <subcellularLocation>
        <location evidence="1">Nucleus</location>
    </subcellularLocation>
</comment>
<comment type="similarity">
    <text evidence="3">Belongs to the PIH1 family.</text>
</comment>
<dbReference type="EMBL" id="BC046655">
    <property type="protein sequence ID" value="AAH46655.1"/>
    <property type="molecule type" value="mRNA"/>
</dbReference>
<dbReference type="EMBL" id="BC106293">
    <property type="protein sequence ID" value="AAI06294.1"/>
    <property type="molecule type" value="mRNA"/>
</dbReference>
<dbReference type="RefSeq" id="NP_001079638.1">
    <property type="nucleotide sequence ID" value="NM_001086169.1"/>
</dbReference>
<dbReference type="SMR" id="Q7ZWY2"/>
<dbReference type="BioGRID" id="97568">
    <property type="interactions" value="2"/>
</dbReference>
<dbReference type="IntAct" id="Q7ZWY2">
    <property type="interactions" value="1"/>
</dbReference>
<dbReference type="DNASU" id="379325"/>
<dbReference type="GeneID" id="379325"/>
<dbReference type="KEGG" id="xla:379325"/>
<dbReference type="AGR" id="Xenbase:XB-GENE-1013261"/>
<dbReference type="CTD" id="379325"/>
<dbReference type="Xenbase" id="XB-GENE-1013261">
    <property type="gene designation" value="pih1d1.L"/>
</dbReference>
<dbReference type="OrthoDB" id="5135119at2759"/>
<dbReference type="Proteomes" id="UP000186698">
    <property type="component" value="Chromosome 7L"/>
</dbReference>
<dbReference type="Bgee" id="379325">
    <property type="expression patterns" value="Expressed in oocyte and 19 other cell types or tissues"/>
</dbReference>
<dbReference type="GO" id="GO:0005737">
    <property type="term" value="C:cytoplasm"/>
    <property type="evidence" value="ECO:0000318"/>
    <property type="project" value="GO_Central"/>
</dbReference>
<dbReference type="GO" id="GO:0005634">
    <property type="term" value="C:nucleus"/>
    <property type="evidence" value="ECO:0000250"/>
    <property type="project" value="UniProtKB"/>
</dbReference>
<dbReference type="GO" id="GO:0097255">
    <property type="term" value="C:R2TP complex"/>
    <property type="evidence" value="ECO:0000318"/>
    <property type="project" value="GO_Central"/>
</dbReference>
<dbReference type="GO" id="GO:1990904">
    <property type="term" value="C:ribonucleoprotein complex"/>
    <property type="evidence" value="ECO:0000318"/>
    <property type="project" value="GO_Central"/>
</dbReference>
<dbReference type="GO" id="GO:0000492">
    <property type="term" value="P:box C/D snoRNP assembly"/>
    <property type="evidence" value="ECO:0000318"/>
    <property type="project" value="GO_Central"/>
</dbReference>
<dbReference type="GO" id="GO:0006364">
    <property type="term" value="P:rRNA processing"/>
    <property type="evidence" value="ECO:0000318"/>
    <property type="project" value="GO_Central"/>
</dbReference>
<dbReference type="InterPro" id="IPR050734">
    <property type="entry name" value="PIH1/Kintoun_subfamily"/>
</dbReference>
<dbReference type="InterPro" id="IPR012981">
    <property type="entry name" value="PIH1_N"/>
</dbReference>
<dbReference type="InterPro" id="IPR041442">
    <property type="entry name" value="PIH1D1/2/3_CS-like"/>
</dbReference>
<dbReference type="PANTHER" id="PTHR22997">
    <property type="entry name" value="PIH1 DOMAIN-CONTAINING PROTEIN 1"/>
    <property type="match status" value="1"/>
</dbReference>
<dbReference type="PANTHER" id="PTHR22997:SF0">
    <property type="entry name" value="PIH1 DOMAIN-CONTAINING PROTEIN 1"/>
    <property type="match status" value="1"/>
</dbReference>
<dbReference type="Pfam" id="PF08190">
    <property type="entry name" value="PIH1"/>
    <property type="match status" value="1"/>
</dbReference>
<dbReference type="Pfam" id="PF18201">
    <property type="entry name" value="PIH1_CS"/>
    <property type="match status" value="1"/>
</dbReference>
<organism>
    <name type="scientific">Xenopus laevis</name>
    <name type="common">African clawed frog</name>
    <dbReference type="NCBI Taxonomy" id="8355"/>
    <lineage>
        <taxon>Eukaryota</taxon>
        <taxon>Metazoa</taxon>
        <taxon>Chordata</taxon>
        <taxon>Craniata</taxon>
        <taxon>Vertebrata</taxon>
        <taxon>Euteleostomi</taxon>
        <taxon>Amphibia</taxon>
        <taxon>Batrachia</taxon>
        <taxon>Anura</taxon>
        <taxon>Pipoidea</taxon>
        <taxon>Pipidae</taxon>
        <taxon>Xenopodinae</taxon>
        <taxon>Xenopus</taxon>
        <taxon>Xenopus</taxon>
    </lineage>
</organism>
<evidence type="ECO:0000250" key="1">
    <source>
        <dbReference type="UniProtKB" id="Q9CQJ2"/>
    </source>
</evidence>
<evidence type="ECO:0000250" key="2">
    <source>
        <dbReference type="UniProtKB" id="Q9NWS0"/>
    </source>
</evidence>
<evidence type="ECO:0000305" key="3"/>
<accession>Q7ZWY2</accession>
<keyword id="KW-0539">Nucleus</keyword>
<keyword id="KW-1185">Reference proteome</keyword>
<keyword id="KW-0804">Transcription</keyword>
<keyword id="KW-0805">Transcription regulation</keyword>
<sequence length="297" mass="33656">MESDKSLLSAELNSEFEQALYEQMLLKAKQEMQNRLPNTPESKQIRPQPGFCIKTQTSEKAKIFINICKTNDIPAPPDLSEAELVNILESDDPSGYRVPMSIGEPHVEVDNSGNGCTVYDIVINSTFFDKMKSNELFREFFITVAMEGLENKYEMELSRDWRMLKNRKFMGSISDQNIRTKSKPIIQELDTSSSQTLQSKPLISEIQSSPKVPEYTIAAEPSEGHPSFLVAEISLPNVTSVRSLVLDLGEDRIVLWGRPDLYHLDIFLPYNIVQEESGAQFNRDTKVLTITMPVQTI</sequence>
<gene>
    <name type="primary">pih1d1</name>
</gene>
<reference key="1">
    <citation type="submission" date="2003-02" db="EMBL/GenBank/DDBJ databases">
        <authorList>
            <consortium name="NIH - Xenopus Gene Collection (XGC) project"/>
        </authorList>
    </citation>
    <scope>NUCLEOTIDE SEQUENCE [LARGE SCALE MRNA]</scope>
    <source>
        <tissue>Embryo</tissue>
        <tissue>Testis</tissue>
    </source>
</reference>